<evidence type="ECO:0000255" key="1">
    <source>
        <dbReference type="HAMAP-Rule" id="MF_00003"/>
    </source>
</evidence>
<name>RBFA_CLOB6</name>
<proteinExistence type="inferred from homology"/>
<reference key="1">
    <citation type="submission" date="2008-05" db="EMBL/GenBank/DDBJ databases">
        <title>Genome sequence of Clostridium botulinum Ba4 strain 657.</title>
        <authorList>
            <person name="Shrivastava S."/>
            <person name="Brown J.L."/>
            <person name="Bruce D."/>
            <person name="Detter C."/>
            <person name="Munk C."/>
            <person name="Smith L.A."/>
            <person name="Smith T.J."/>
            <person name="Sutton G."/>
            <person name="Brettin T.S."/>
        </authorList>
    </citation>
    <scope>NUCLEOTIDE SEQUENCE [LARGE SCALE GENOMIC DNA]</scope>
    <source>
        <strain>657 / Type Ba4</strain>
    </source>
</reference>
<keyword id="KW-0963">Cytoplasm</keyword>
<keyword id="KW-0690">Ribosome biogenesis</keyword>
<accession>C3L0B5</accession>
<protein>
    <recommendedName>
        <fullName evidence="1">Ribosome-binding factor A</fullName>
    </recommendedName>
</protein>
<comment type="function">
    <text evidence="1">One of several proteins that assist in the late maturation steps of the functional core of the 30S ribosomal subunit. Associates with free 30S ribosomal subunits (but not with 30S subunits that are part of 70S ribosomes or polysomes). Required for efficient processing of 16S rRNA. May interact with the 5'-terminal helix region of 16S rRNA.</text>
</comment>
<comment type="subunit">
    <text evidence="1">Monomer. Binds 30S ribosomal subunits, but not 50S ribosomal subunits or 70S ribosomes.</text>
</comment>
<comment type="subcellular location">
    <subcellularLocation>
        <location evidence="1">Cytoplasm</location>
    </subcellularLocation>
</comment>
<comment type="similarity">
    <text evidence="1">Belongs to the RbfA family.</text>
</comment>
<dbReference type="EMBL" id="CP001083">
    <property type="protein sequence ID" value="ACQ52081.1"/>
    <property type="molecule type" value="Genomic_DNA"/>
</dbReference>
<dbReference type="RefSeq" id="WP_003362558.1">
    <property type="nucleotide sequence ID" value="NC_012658.1"/>
</dbReference>
<dbReference type="SMR" id="C3L0B5"/>
<dbReference type="KEGG" id="cbi:CLJ_B2642"/>
<dbReference type="HOGENOM" id="CLU_089475_6_3_9"/>
<dbReference type="Proteomes" id="UP000002333">
    <property type="component" value="Chromosome"/>
</dbReference>
<dbReference type="GO" id="GO:0005829">
    <property type="term" value="C:cytosol"/>
    <property type="evidence" value="ECO:0007669"/>
    <property type="project" value="TreeGrafter"/>
</dbReference>
<dbReference type="GO" id="GO:0043024">
    <property type="term" value="F:ribosomal small subunit binding"/>
    <property type="evidence" value="ECO:0007669"/>
    <property type="project" value="TreeGrafter"/>
</dbReference>
<dbReference type="GO" id="GO:0030490">
    <property type="term" value="P:maturation of SSU-rRNA"/>
    <property type="evidence" value="ECO:0007669"/>
    <property type="project" value="UniProtKB-UniRule"/>
</dbReference>
<dbReference type="FunFam" id="3.30.300.20:FF:000030">
    <property type="entry name" value="Ribosome-binding factor A"/>
    <property type="match status" value="1"/>
</dbReference>
<dbReference type="Gene3D" id="3.30.300.20">
    <property type="match status" value="1"/>
</dbReference>
<dbReference type="HAMAP" id="MF_00003">
    <property type="entry name" value="RbfA"/>
    <property type="match status" value="1"/>
</dbReference>
<dbReference type="InterPro" id="IPR015946">
    <property type="entry name" value="KH_dom-like_a/b"/>
</dbReference>
<dbReference type="InterPro" id="IPR000238">
    <property type="entry name" value="RbfA"/>
</dbReference>
<dbReference type="InterPro" id="IPR023799">
    <property type="entry name" value="RbfA_dom_sf"/>
</dbReference>
<dbReference type="InterPro" id="IPR020053">
    <property type="entry name" value="Ribosome-bd_factorA_CS"/>
</dbReference>
<dbReference type="NCBIfam" id="TIGR00082">
    <property type="entry name" value="rbfA"/>
    <property type="match status" value="1"/>
</dbReference>
<dbReference type="PANTHER" id="PTHR33515">
    <property type="entry name" value="RIBOSOME-BINDING FACTOR A, CHLOROPLASTIC-RELATED"/>
    <property type="match status" value="1"/>
</dbReference>
<dbReference type="PANTHER" id="PTHR33515:SF1">
    <property type="entry name" value="RIBOSOME-BINDING FACTOR A, CHLOROPLASTIC-RELATED"/>
    <property type="match status" value="1"/>
</dbReference>
<dbReference type="Pfam" id="PF02033">
    <property type="entry name" value="RBFA"/>
    <property type="match status" value="1"/>
</dbReference>
<dbReference type="SUPFAM" id="SSF89919">
    <property type="entry name" value="Ribosome-binding factor A, RbfA"/>
    <property type="match status" value="1"/>
</dbReference>
<dbReference type="PROSITE" id="PS01319">
    <property type="entry name" value="RBFA"/>
    <property type="match status" value="1"/>
</dbReference>
<sequence length="120" mass="13682">MAKYRAGRINEEVKKEVSNIIHNDIKDPRLSAMVSVTDVNVTKDLKYAKVYVSIFGNEKAKEESLQALKSSVGFIRKEVGRRVKLRNTPEVIIEVDNSIERGMHIDELLHSIKENESNDN</sequence>
<organism>
    <name type="scientific">Clostridium botulinum (strain 657 / Type Ba4)</name>
    <dbReference type="NCBI Taxonomy" id="515621"/>
    <lineage>
        <taxon>Bacteria</taxon>
        <taxon>Bacillati</taxon>
        <taxon>Bacillota</taxon>
        <taxon>Clostridia</taxon>
        <taxon>Eubacteriales</taxon>
        <taxon>Clostridiaceae</taxon>
        <taxon>Clostridium</taxon>
    </lineage>
</organism>
<gene>
    <name evidence="1" type="primary">rbfA</name>
    <name type="ordered locus">CLJ_B2642</name>
</gene>
<feature type="chain" id="PRO_1000201625" description="Ribosome-binding factor A">
    <location>
        <begin position="1"/>
        <end position="120"/>
    </location>
</feature>